<accession>A5ILZ3</accession>
<comment type="similarity">
    <text evidence="1">Belongs to the bacterial ribosomal protein bL35 family.</text>
</comment>
<sequence>MPKMKTNRSAAKRFRITKNGKIMRNHAYRSHKTGKKRRNTLRELRKKDVVSSTDKYRILRLLGKK</sequence>
<organism>
    <name type="scientific">Thermotoga petrophila (strain ATCC BAA-488 / DSM 13995 / JCM 10881 / RKU-1)</name>
    <dbReference type="NCBI Taxonomy" id="390874"/>
    <lineage>
        <taxon>Bacteria</taxon>
        <taxon>Thermotogati</taxon>
        <taxon>Thermotogota</taxon>
        <taxon>Thermotogae</taxon>
        <taxon>Thermotogales</taxon>
        <taxon>Thermotogaceae</taxon>
        <taxon>Thermotoga</taxon>
    </lineage>
</organism>
<dbReference type="EMBL" id="CP000702">
    <property type="protein sequence ID" value="ABQ47216.1"/>
    <property type="molecule type" value="Genomic_DNA"/>
</dbReference>
<dbReference type="RefSeq" id="WP_011943720.1">
    <property type="nucleotide sequence ID" value="NC_009486.1"/>
</dbReference>
<dbReference type="SMR" id="A5ILZ3"/>
<dbReference type="STRING" id="390874.Tpet_1202"/>
<dbReference type="KEGG" id="tpt:Tpet_1202"/>
<dbReference type="eggNOG" id="COG0291">
    <property type="taxonomic scope" value="Bacteria"/>
</dbReference>
<dbReference type="HOGENOM" id="CLU_169643_4_3_0"/>
<dbReference type="Proteomes" id="UP000006558">
    <property type="component" value="Chromosome"/>
</dbReference>
<dbReference type="GO" id="GO:0022625">
    <property type="term" value="C:cytosolic large ribosomal subunit"/>
    <property type="evidence" value="ECO:0007669"/>
    <property type="project" value="TreeGrafter"/>
</dbReference>
<dbReference type="GO" id="GO:0003735">
    <property type="term" value="F:structural constituent of ribosome"/>
    <property type="evidence" value="ECO:0007669"/>
    <property type="project" value="InterPro"/>
</dbReference>
<dbReference type="GO" id="GO:0006412">
    <property type="term" value="P:translation"/>
    <property type="evidence" value="ECO:0007669"/>
    <property type="project" value="UniProtKB-UniRule"/>
</dbReference>
<dbReference type="FunFam" id="4.10.410.60:FF:000001">
    <property type="entry name" value="50S ribosomal protein L35"/>
    <property type="match status" value="1"/>
</dbReference>
<dbReference type="Gene3D" id="4.10.410.60">
    <property type="match status" value="1"/>
</dbReference>
<dbReference type="HAMAP" id="MF_00514">
    <property type="entry name" value="Ribosomal_bL35"/>
    <property type="match status" value="1"/>
</dbReference>
<dbReference type="InterPro" id="IPR001706">
    <property type="entry name" value="Ribosomal_bL35"/>
</dbReference>
<dbReference type="InterPro" id="IPR021137">
    <property type="entry name" value="Ribosomal_bL35-like"/>
</dbReference>
<dbReference type="InterPro" id="IPR018265">
    <property type="entry name" value="Ribosomal_bL35_CS"/>
</dbReference>
<dbReference type="InterPro" id="IPR037229">
    <property type="entry name" value="Ribosomal_bL35_sf"/>
</dbReference>
<dbReference type="NCBIfam" id="TIGR00001">
    <property type="entry name" value="rpmI_bact"/>
    <property type="match status" value="1"/>
</dbReference>
<dbReference type="PANTHER" id="PTHR33343">
    <property type="entry name" value="54S RIBOSOMAL PROTEIN BL35M"/>
    <property type="match status" value="1"/>
</dbReference>
<dbReference type="PANTHER" id="PTHR33343:SF1">
    <property type="entry name" value="LARGE RIBOSOMAL SUBUNIT PROTEIN BL35M"/>
    <property type="match status" value="1"/>
</dbReference>
<dbReference type="Pfam" id="PF01632">
    <property type="entry name" value="Ribosomal_L35p"/>
    <property type="match status" value="1"/>
</dbReference>
<dbReference type="PRINTS" id="PR00064">
    <property type="entry name" value="RIBOSOMALL35"/>
</dbReference>
<dbReference type="SUPFAM" id="SSF143034">
    <property type="entry name" value="L35p-like"/>
    <property type="match status" value="1"/>
</dbReference>
<dbReference type="PROSITE" id="PS00936">
    <property type="entry name" value="RIBOSOMAL_L35"/>
    <property type="match status" value="1"/>
</dbReference>
<feature type="chain" id="PRO_1000050785" description="Large ribosomal subunit protein bL35">
    <location>
        <begin position="1"/>
        <end position="65"/>
    </location>
</feature>
<reference key="1">
    <citation type="submission" date="2007-05" db="EMBL/GenBank/DDBJ databases">
        <title>Complete sequence of Thermotoga petrophila RKU-1.</title>
        <authorList>
            <consortium name="US DOE Joint Genome Institute"/>
            <person name="Copeland A."/>
            <person name="Lucas S."/>
            <person name="Lapidus A."/>
            <person name="Barry K."/>
            <person name="Glavina del Rio T."/>
            <person name="Dalin E."/>
            <person name="Tice H."/>
            <person name="Pitluck S."/>
            <person name="Sims D."/>
            <person name="Brettin T."/>
            <person name="Bruce D."/>
            <person name="Detter J.C."/>
            <person name="Han C."/>
            <person name="Tapia R."/>
            <person name="Schmutz J."/>
            <person name="Larimer F."/>
            <person name="Land M."/>
            <person name="Hauser L."/>
            <person name="Kyrpides N."/>
            <person name="Mikhailova N."/>
            <person name="Nelson K."/>
            <person name="Gogarten J.P."/>
            <person name="Noll K."/>
            <person name="Richardson P."/>
        </authorList>
    </citation>
    <scope>NUCLEOTIDE SEQUENCE [LARGE SCALE GENOMIC DNA]</scope>
    <source>
        <strain>ATCC BAA-488 / DSM 13995 / JCM 10881 / RKU-1</strain>
    </source>
</reference>
<name>RL35_THEP1</name>
<evidence type="ECO:0000255" key="1">
    <source>
        <dbReference type="HAMAP-Rule" id="MF_00514"/>
    </source>
</evidence>
<evidence type="ECO:0000305" key="2"/>
<keyword id="KW-0687">Ribonucleoprotein</keyword>
<keyword id="KW-0689">Ribosomal protein</keyword>
<protein>
    <recommendedName>
        <fullName evidence="1">Large ribosomal subunit protein bL35</fullName>
    </recommendedName>
    <alternativeName>
        <fullName evidence="2">50S ribosomal protein L35</fullName>
    </alternativeName>
</protein>
<gene>
    <name evidence="1" type="primary">rpmI</name>
    <name type="ordered locus">Tpet_1202</name>
</gene>
<proteinExistence type="inferred from homology"/>